<name>YOAW_BACSU</name>
<proteinExistence type="inferred from homology"/>
<feature type="signal peptide" evidence="1">
    <location>
        <begin position="1"/>
        <end position="24"/>
    </location>
</feature>
<feature type="chain" id="PRO_0000013717" description="Uncharacterized protein YoaW">
    <location>
        <begin position="25"/>
        <end position="143"/>
    </location>
</feature>
<reference key="1">
    <citation type="submission" date="1997-11" db="EMBL/GenBank/DDBJ databases">
        <title>Sequence analysis of the Bacillus subtilis chromosome region between the terC and odhAB loci cloned in a yeast artificial chromosome.</title>
        <authorList>
            <person name="Lapidus A."/>
            <person name="Galleron N."/>
            <person name="Sorokin A."/>
            <person name="Ehrlich S.D."/>
        </authorList>
    </citation>
    <scope>NUCLEOTIDE SEQUENCE [GENOMIC DNA]</scope>
</reference>
<reference key="2">
    <citation type="journal article" date="1997" name="Nature">
        <title>The complete genome sequence of the Gram-positive bacterium Bacillus subtilis.</title>
        <authorList>
            <person name="Kunst F."/>
            <person name="Ogasawara N."/>
            <person name="Moszer I."/>
            <person name="Albertini A.M."/>
            <person name="Alloni G."/>
            <person name="Azevedo V."/>
            <person name="Bertero M.G."/>
            <person name="Bessieres P."/>
            <person name="Bolotin A."/>
            <person name="Borchert S."/>
            <person name="Borriss R."/>
            <person name="Boursier L."/>
            <person name="Brans A."/>
            <person name="Braun M."/>
            <person name="Brignell S.C."/>
            <person name="Bron S."/>
            <person name="Brouillet S."/>
            <person name="Bruschi C.V."/>
            <person name="Caldwell B."/>
            <person name="Capuano V."/>
            <person name="Carter N.M."/>
            <person name="Choi S.-K."/>
            <person name="Codani J.-J."/>
            <person name="Connerton I.F."/>
            <person name="Cummings N.J."/>
            <person name="Daniel R.A."/>
            <person name="Denizot F."/>
            <person name="Devine K.M."/>
            <person name="Duesterhoeft A."/>
            <person name="Ehrlich S.D."/>
            <person name="Emmerson P.T."/>
            <person name="Entian K.-D."/>
            <person name="Errington J."/>
            <person name="Fabret C."/>
            <person name="Ferrari E."/>
            <person name="Foulger D."/>
            <person name="Fritz C."/>
            <person name="Fujita M."/>
            <person name="Fujita Y."/>
            <person name="Fuma S."/>
            <person name="Galizzi A."/>
            <person name="Galleron N."/>
            <person name="Ghim S.-Y."/>
            <person name="Glaser P."/>
            <person name="Goffeau A."/>
            <person name="Golightly E.J."/>
            <person name="Grandi G."/>
            <person name="Guiseppi G."/>
            <person name="Guy B.J."/>
            <person name="Haga K."/>
            <person name="Haiech J."/>
            <person name="Harwood C.R."/>
            <person name="Henaut A."/>
            <person name="Hilbert H."/>
            <person name="Holsappel S."/>
            <person name="Hosono S."/>
            <person name="Hullo M.-F."/>
            <person name="Itaya M."/>
            <person name="Jones L.-M."/>
            <person name="Joris B."/>
            <person name="Karamata D."/>
            <person name="Kasahara Y."/>
            <person name="Klaerr-Blanchard M."/>
            <person name="Klein C."/>
            <person name="Kobayashi Y."/>
            <person name="Koetter P."/>
            <person name="Koningstein G."/>
            <person name="Krogh S."/>
            <person name="Kumano M."/>
            <person name="Kurita K."/>
            <person name="Lapidus A."/>
            <person name="Lardinois S."/>
            <person name="Lauber J."/>
            <person name="Lazarevic V."/>
            <person name="Lee S.-M."/>
            <person name="Levine A."/>
            <person name="Liu H."/>
            <person name="Masuda S."/>
            <person name="Mauel C."/>
            <person name="Medigue C."/>
            <person name="Medina N."/>
            <person name="Mellado R.P."/>
            <person name="Mizuno M."/>
            <person name="Moestl D."/>
            <person name="Nakai S."/>
            <person name="Noback M."/>
            <person name="Noone D."/>
            <person name="O'Reilly M."/>
            <person name="Ogawa K."/>
            <person name="Ogiwara A."/>
            <person name="Oudega B."/>
            <person name="Park S.-H."/>
            <person name="Parro V."/>
            <person name="Pohl T.M."/>
            <person name="Portetelle D."/>
            <person name="Porwollik S."/>
            <person name="Prescott A.M."/>
            <person name="Presecan E."/>
            <person name="Pujic P."/>
            <person name="Purnelle B."/>
            <person name="Rapoport G."/>
            <person name="Rey M."/>
            <person name="Reynolds S."/>
            <person name="Rieger M."/>
            <person name="Rivolta C."/>
            <person name="Rocha E."/>
            <person name="Roche B."/>
            <person name="Rose M."/>
            <person name="Sadaie Y."/>
            <person name="Sato T."/>
            <person name="Scanlan E."/>
            <person name="Schleich S."/>
            <person name="Schroeter R."/>
            <person name="Scoffone F."/>
            <person name="Sekiguchi J."/>
            <person name="Sekowska A."/>
            <person name="Seror S.J."/>
            <person name="Serror P."/>
            <person name="Shin B.-S."/>
            <person name="Soldo B."/>
            <person name="Sorokin A."/>
            <person name="Tacconi E."/>
            <person name="Takagi T."/>
            <person name="Takahashi H."/>
            <person name="Takemaru K."/>
            <person name="Takeuchi M."/>
            <person name="Tamakoshi A."/>
            <person name="Tanaka T."/>
            <person name="Terpstra P."/>
            <person name="Tognoni A."/>
            <person name="Tosato V."/>
            <person name="Uchiyama S."/>
            <person name="Vandenbol M."/>
            <person name="Vannier F."/>
            <person name="Vassarotti A."/>
            <person name="Viari A."/>
            <person name="Wambutt R."/>
            <person name="Wedler E."/>
            <person name="Wedler H."/>
            <person name="Weitzenegger T."/>
            <person name="Winters P."/>
            <person name="Wipat A."/>
            <person name="Yamamoto H."/>
            <person name="Yamane K."/>
            <person name="Yasumoto K."/>
            <person name="Yata K."/>
            <person name="Yoshida K."/>
            <person name="Yoshikawa H.-F."/>
            <person name="Zumstein E."/>
            <person name="Yoshikawa H."/>
            <person name="Danchin A."/>
        </authorList>
    </citation>
    <scope>NUCLEOTIDE SEQUENCE [LARGE SCALE GENOMIC DNA]</scope>
    <source>
        <strain>168</strain>
    </source>
</reference>
<dbReference type="EMBL" id="AF027868">
    <property type="protein sequence ID" value="AAB84455.1"/>
    <property type="molecule type" value="Genomic_DNA"/>
</dbReference>
<dbReference type="EMBL" id="AL009126">
    <property type="protein sequence ID" value="CAB13770.1"/>
    <property type="molecule type" value="Genomic_DNA"/>
</dbReference>
<dbReference type="PIR" id="H69897">
    <property type="entry name" value="H69897"/>
</dbReference>
<dbReference type="RefSeq" id="NP_389759.1">
    <property type="nucleotide sequence ID" value="NC_000964.3"/>
</dbReference>
<dbReference type="RefSeq" id="WP_004399438.1">
    <property type="nucleotide sequence ID" value="NZ_OZ025638.1"/>
</dbReference>
<dbReference type="FunCoup" id="O34541">
    <property type="interactions" value="65"/>
</dbReference>
<dbReference type="STRING" id="224308.BSU18780"/>
<dbReference type="PaxDb" id="224308-BSU18780"/>
<dbReference type="DNASU" id="940131"/>
<dbReference type="EnsemblBacteria" id="CAB13770">
    <property type="protein sequence ID" value="CAB13770"/>
    <property type="gene ID" value="BSU_18780"/>
</dbReference>
<dbReference type="GeneID" id="940131"/>
<dbReference type="KEGG" id="bsu:BSU18780"/>
<dbReference type="PATRIC" id="fig|224308.179.peg.2047"/>
<dbReference type="eggNOG" id="ENOG5030BTX">
    <property type="taxonomic scope" value="Bacteria"/>
</dbReference>
<dbReference type="InParanoid" id="O34541"/>
<dbReference type="OrthoDB" id="2893156at2"/>
<dbReference type="BioCyc" id="BSUB:BSU18780-MONOMER"/>
<dbReference type="Proteomes" id="UP000001570">
    <property type="component" value="Chromosome"/>
</dbReference>
<protein>
    <recommendedName>
        <fullName>Uncharacterized protein YoaW</fullName>
    </recommendedName>
</protein>
<keyword id="KW-1185">Reference proteome</keyword>
<keyword id="KW-0732">Signal</keyword>
<organism>
    <name type="scientific">Bacillus subtilis (strain 168)</name>
    <dbReference type="NCBI Taxonomy" id="224308"/>
    <lineage>
        <taxon>Bacteria</taxon>
        <taxon>Bacillati</taxon>
        <taxon>Bacillota</taxon>
        <taxon>Bacilli</taxon>
        <taxon>Bacillales</taxon>
        <taxon>Bacillaceae</taxon>
        <taxon>Bacillus</taxon>
    </lineage>
</organism>
<accession>O34541</accession>
<evidence type="ECO:0000255" key="1"/>
<sequence>MKKMLMLAFTFLLALTIHVGEASAVIVKDEEKVSFTMTENEKWFMKSDDLNSNHWTSHFGYRFTIFDTEGCTINARIMRMTLSGYEITVSEKNFSGDHFDFSATDRVETMPYKTHYLILTKDPDCGDVKVKGLYGFQFDQPEW</sequence>
<gene>
    <name type="primary">yoaW</name>
    <name type="ordered locus">BSU18780</name>
</gene>